<comment type="function">
    <text evidence="1">Produces ATP from ADP in the presence of a proton gradient across the membrane. The alpha chain is a regulatory subunit.</text>
</comment>
<comment type="catalytic activity">
    <reaction evidence="1">
        <text>ATP + H2O + 4 H(+)(in) = ADP + phosphate + 5 H(+)(out)</text>
        <dbReference type="Rhea" id="RHEA:57720"/>
        <dbReference type="ChEBI" id="CHEBI:15377"/>
        <dbReference type="ChEBI" id="CHEBI:15378"/>
        <dbReference type="ChEBI" id="CHEBI:30616"/>
        <dbReference type="ChEBI" id="CHEBI:43474"/>
        <dbReference type="ChEBI" id="CHEBI:456216"/>
        <dbReference type="EC" id="7.1.2.2"/>
    </reaction>
</comment>
<comment type="subunit">
    <text evidence="1">F-type ATPases have 2 components, CF(1) - the catalytic core - and CF(0) - the membrane proton channel. CF(1) has five subunits: alpha(3), beta(3), gamma(1), delta(1), epsilon(1). CF(0) has three main subunits: a(1), b(2) and c(9-12). The alpha and beta chains form an alternating ring which encloses part of the gamma chain. CF(1) is attached to CF(0) by a central stalk formed by the gamma and epsilon chains, while a peripheral stalk is formed by the delta and b chains.</text>
</comment>
<comment type="subcellular location">
    <subcellularLocation>
        <location evidence="1">Cell inner membrane</location>
        <topology evidence="1">Peripheral membrane protein</topology>
    </subcellularLocation>
</comment>
<comment type="similarity">
    <text evidence="1">Belongs to the ATPase alpha/beta chains family.</text>
</comment>
<proteinExistence type="inferred from homology"/>
<keyword id="KW-0066">ATP synthesis</keyword>
<keyword id="KW-0067">ATP-binding</keyword>
<keyword id="KW-0997">Cell inner membrane</keyword>
<keyword id="KW-1003">Cell membrane</keyword>
<keyword id="KW-0139">CF(1)</keyword>
<keyword id="KW-0375">Hydrogen ion transport</keyword>
<keyword id="KW-0406">Ion transport</keyword>
<keyword id="KW-0472">Membrane</keyword>
<keyword id="KW-0547">Nucleotide-binding</keyword>
<keyword id="KW-1278">Translocase</keyword>
<keyword id="KW-0813">Transport</keyword>
<name>ATPA_XYLFA</name>
<evidence type="ECO:0000255" key="1">
    <source>
        <dbReference type="HAMAP-Rule" id="MF_01346"/>
    </source>
</evidence>
<organism>
    <name type="scientific">Xylella fastidiosa (strain 9a5c)</name>
    <dbReference type="NCBI Taxonomy" id="160492"/>
    <lineage>
        <taxon>Bacteria</taxon>
        <taxon>Pseudomonadati</taxon>
        <taxon>Pseudomonadota</taxon>
        <taxon>Gammaproteobacteria</taxon>
        <taxon>Lysobacterales</taxon>
        <taxon>Lysobacteraceae</taxon>
        <taxon>Xylella</taxon>
    </lineage>
</organism>
<accession>Q9PE83</accession>
<protein>
    <recommendedName>
        <fullName evidence="1">ATP synthase subunit alpha</fullName>
        <ecNumber evidence="1">7.1.2.2</ecNumber>
    </recommendedName>
    <alternativeName>
        <fullName evidence="1">ATP synthase F1 sector subunit alpha</fullName>
    </alternativeName>
    <alternativeName>
        <fullName evidence="1">F-ATPase subunit alpha</fullName>
    </alternativeName>
</protein>
<sequence length="515" mass="55967">MATTLNPSEISELIKTRIEQVKLSAESRNEGTVTSVSDGIVRIFGLADAMQGEMIELPNKTYALALNLERDSVGAVVLGDYEHLREGDIAKTTGRILEVPVGKSLLGRVVNALGEPIDGKGALGPTQTAPVERVAPGVIWRKSVNQPVQTGYKSVDAMIPIGRGQRELIIGDRQTGKTAMAIDTVISQKDTGIKCVYVAIGQKASTIANIVRKLEENDALDHTIVVAATASESAALQYISAYAGCTMGEYFMDRGEDALIIYDDLSKQAVAYRQISLLLKRPPGREAYPGDVFYLHSRLLERAARVSEEYVEKFTQGEVKGKTGSLTALPIIETQAGDVSAFVPTNVISITDGQIFLETDLFNAGIRPAVNAGISVSRVGGSAQTKIIKKLSGGIRISLAQYRELAAFAQFASDLDETTRKQLERGQRVTELMKQKQYTSMSVANQALSIYAVNEGYLDDVPVDKVLTFEESLHAHFSNTQSALIDKINTSGDWDNNIEAAFKKHIEEFKTTGSW</sequence>
<feature type="chain" id="PRO_0000238408" description="ATP synthase subunit alpha">
    <location>
        <begin position="1"/>
        <end position="515"/>
    </location>
</feature>
<feature type="binding site" evidence="1">
    <location>
        <begin position="171"/>
        <end position="178"/>
    </location>
    <ligand>
        <name>ATP</name>
        <dbReference type="ChEBI" id="CHEBI:30616"/>
    </ligand>
</feature>
<feature type="site" description="Required for activity" evidence="1">
    <location>
        <position position="375"/>
    </location>
</feature>
<gene>
    <name evidence="1" type="primary">atpA</name>
    <name type="ordered locus">XF_1145</name>
</gene>
<reference key="1">
    <citation type="journal article" date="2000" name="Nature">
        <title>The genome sequence of the plant pathogen Xylella fastidiosa.</title>
        <authorList>
            <person name="Simpson A.J.G."/>
            <person name="Reinach F.C."/>
            <person name="Arruda P."/>
            <person name="Abreu F.A."/>
            <person name="Acencio M."/>
            <person name="Alvarenga R."/>
            <person name="Alves L.M.C."/>
            <person name="Araya J.E."/>
            <person name="Baia G.S."/>
            <person name="Baptista C.S."/>
            <person name="Barros M.H."/>
            <person name="Bonaccorsi E.D."/>
            <person name="Bordin S."/>
            <person name="Bove J.M."/>
            <person name="Briones M.R.S."/>
            <person name="Bueno M.R.P."/>
            <person name="Camargo A.A."/>
            <person name="Camargo L.E.A."/>
            <person name="Carraro D.M."/>
            <person name="Carrer H."/>
            <person name="Colauto N.B."/>
            <person name="Colombo C."/>
            <person name="Costa F.F."/>
            <person name="Costa M.C.R."/>
            <person name="Costa-Neto C.M."/>
            <person name="Coutinho L.L."/>
            <person name="Cristofani M."/>
            <person name="Dias-Neto E."/>
            <person name="Docena C."/>
            <person name="El-Dorry H."/>
            <person name="Facincani A.P."/>
            <person name="Ferreira A.J.S."/>
            <person name="Ferreira V.C.A."/>
            <person name="Ferro J.A."/>
            <person name="Fraga J.S."/>
            <person name="Franca S.C."/>
            <person name="Franco M.C."/>
            <person name="Frohme M."/>
            <person name="Furlan L.R."/>
            <person name="Garnier M."/>
            <person name="Goldman G.H."/>
            <person name="Goldman M.H.S."/>
            <person name="Gomes S.L."/>
            <person name="Gruber A."/>
            <person name="Ho P.L."/>
            <person name="Hoheisel J.D."/>
            <person name="Junqueira M.L."/>
            <person name="Kemper E.L."/>
            <person name="Kitajima J.P."/>
            <person name="Krieger J.E."/>
            <person name="Kuramae E.E."/>
            <person name="Laigret F."/>
            <person name="Lambais M.R."/>
            <person name="Leite L.C.C."/>
            <person name="Lemos E.G.M."/>
            <person name="Lemos M.V.F."/>
            <person name="Lopes S.A."/>
            <person name="Lopes C.R."/>
            <person name="Machado J.A."/>
            <person name="Machado M.A."/>
            <person name="Madeira A.M.B.N."/>
            <person name="Madeira H.M.F."/>
            <person name="Marino C.L."/>
            <person name="Marques M.V."/>
            <person name="Martins E.A.L."/>
            <person name="Martins E.M.F."/>
            <person name="Matsukuma A.Y."/>
            <person name="Menck C.F.M."/>
            <person name="Miracca E.C."/>
            <person name="Miyaki C.Y."/>
            <person name="Monteiro-Vitorello C.B."/>
            <person name="Moon D.H."/>
            <person name="Nagai M.A."/>
            <person name="Nascimento A.L.T.O."/>
            <person name="Netto L.E.S."/>
            <person name="Nhani A. Jr."/>
            <person name="Nobrega F.G."/>
            <person name="Nunes L.R."/>
            <person name="Oliveira M.A."/>
            <person name="de Oliveira M.C."/>
            <person name="de Oliveira R.C."/>
            <person name="Palmieri D.A."/>
            <person name="Paris A."/>
            <person name="Peixoto B.R."/>
            <person name="Pereira G.A.G."/>
            <person name="Pereira H.A. Jr."/>
            <person name="Pesquero J.B."/>
            <person name="Quaggio R.B."/>
            <person name="Roberto P.G."/>
            <person name="Rodrigues V."/>
            <person name="de Rosa A.J.M."/>
            <person name="de Rosa V.E. Jr."/>
            <person name="de Sa R.G."/>
            <person name="Santelli R.V."/>
            <person name="Sawasaki H.E."/>
            <person name="da Silva A.C.R."/>
            <person name="da Silva A.M."/>
            <person name="da Silva F.R."/>
            <person name="Silva W.A. Jr."/>
            <person name="da Silveira J.F."/>
            <person name="Silvestri M.L.Z."/>
            <person name="Siqueira W.J."/>
            <person name="de Souza A.A."/>
            <person name="de Souza A.P."/>
            <person name="Terenzi M.F."/>
            <person name="Truffi D."/>
            <person name="Tsai S.M."/>
            <person name="Tsuhako M.H."/>
            <person name="Vallada H."/>
            <person name="Van Sluys M.A."/>
            <person name="Verjovski-Almeida S."/>
            <person name="Vettore A.L."/>
            <person name="Zago M.A."/>
            <person name="Zatz M."/>
            <person name="Meidanis J."/>
            <person name="Setubal J.C."/>
        </authorList>
    </citation>
    <scope>NUCLEOTIDE SEQUENCE [LARGE SCALE GENOMIC DNA]</scope>
    <source>
        <strain>9a5c</strain>
    </source>
</reference>
<dbReference type="EC" id="7.1.2.2" evidence="1"/>
<dbReference type="EMBL" id="AE003849">
    <property type="protein sequence ID" value="AAF83955.1"/>
    <property type="molecule type" value="Genomic_DNA"/>
</dbReference>
<dbReference type="PIR" id="A82716">
    <property type="entry name" value="A82716"/>
</dbReference>
<dbReference type="RefSeq" id="WP_010893662.1">
    <property type="nucleotide sequence ID" value="NC_002488.3"/>
</dbReference>
<dbReference type="SMR" id="Q9PE83"/>
<dbReference type="STRING" id="160492.XF_1145"/>
<dbReference type="KEGG" id="xfa:XF_1145"/>
<dbReference type="eggNOG" id="COG0056">
    <property type="taxonomic scope" value="Bacteria"/>
</dbReference>
<dbReference type="HOGENOM" id="CLU_010091_2_1_6"/>
<dbReference type="Proteomes" id="UP000000812">
    <property type="component" value="Chromosome"/>
</dbReference>
<dbReference type="GO" id="GO:0005886">
    <property type="term" value="C:plasma membrane"/>
    <property type="evidence" value="ECO:0007669"/>
    <property type="project" value="UniProtKB-SubCell"/>
</dbReference>
<dbReference type="GO" id="GO:0045259">
    <property type="term" value="C:proton-transporting ATP synthase complex"/>
    <property type="evidence" value="ECO:0007669"/>
    <property type="project" value="UniProtKB-KW"/>
</dbReference>
<dbReference type="GO" id="GO:0043531">
    <property type="term" value="F:ADP binding"/>
    <property type="evidence" value="ECO:0007669"/>
    <property type="project" value="TreeGrafter"/>
</dbReference>
<dbReference type="GO" id="GO:0005524">
    <property type="term" value="F:ATP binding"/>
    <property type="evidence" value="ECO:0007669"/>
    <property type="project" value="UniProtKB-UniRule"/>
</dbReference>
<dbReference type="GO" id="GO:0046933">
    <property type="term" value="F:proton-transporting ATP synthase activity, rotational mechanism"/>
    <property type="evidence" value="ECO:0007669"/>
    <property type="project" value="UniProtKB-UniRule"/>
</dbReference>
<dbReference type="CDD" id="cd18113">
    <property type="entry name" value="ATP-synt_F1_alpha_C"/>
    <property type="match status" value="1"/>
</dbReference>
<dbReference type="CDD" id="cd18116">
    <property type="entry name" value="ATP-synt_F1_alpha_N"/>
    <property type="match status" value="1"/>
</dbReference>
<dbReference type="CDD" id="cd01132">
    <property type="entry name" value="F1-ATPase_alpha_CD"/>
    <property type="match status" value="1"/>
</dbReference>
<dbReference type="FunFam" id="1.20.150.20:FF:000001">
    <property type="entry name" value="ATP synthase subunit alpha"/>
    <property type="match status" value="1"/>
</dbReference>
<dbReference type="FunFam" id="2.40.30.20:FF:000001">
    <property type="entry name" value="ATP synthase subunit alpha"/>
    <property type="match status" value="1"/>
</dbReference>
<dbReference type="FunFam" id="3.40.50.300:FF:000002">
    <property type="entry name" value="ATP synthase subunit alpha"/>
    <property type="match status" value="1"/>
</dbReference>
<dbReference type="Gene3D" id="2.40.30.20">
    <property type="match status" value="1"/>
</dbReference>
<dbReference type="Gene3D" id="1.20.150.20">
    <property type="entry name" value="ATP synthase alpha/beta chain, C-terminal domain"/>
    <property type="match status" value="1"/>
</dbReference>
<dbReference type="Gene3D" id="3.40.50.300">
    <property type="entry name" value="P-loop containing nucleotide triphosphate hydrolases"/>
    <property type="match status" value="1"/>
</dbReference>
<dbReference type="HAMAP" id="MF_01346">
    <property type="entry name" value="ATP_synth_alpha_bact"/>
    <property type="match status" value="1"/>
</dbReference>
<dbReference type="InterPro" id="IPR023366">
    <property type="entry name" value="ATP_synth_asu-like_sf"/>
</dbReference>
<dbReference type="InterPro" id="IPR000793">
    <property type="entry name" value="ATP_synth_asu_C"/>
</dbReference>
<dbReference type="InterPro" id="IPR038376">
    <property type="entry name" value="ATP_synth_asu_C_sf"/>
</dbReference>
<dbReference type="InterPro" id="IPR033732">
    <property type="entry name" value="ATP_synth_F1_a_nt-bd_dom"/>
</dbReference>
<dbReference type="InterPro" id="IPR005294">
    <property type="entry name" value="ATP_synth_F1_asu"/>
</dbReference>
<dbReference type="InterPro" id="IPR020003">
    <property type="entry name" value="ATPase_a/bsu_AS"/>
</dbReference>
<dbReference type="InterPro" id="IPR004100">
    <property type="entry name" value="ATPase_F1/V1/A1_a/bsu_N"/>
</dbReference>
<dbReference type="InterPro" id="IPR036121">
    <property type="entry name" value="ATPase_F1/V1/A1_a/bsu_N_sf"/>
</dbReference>
<dbReference type="InterPro" id="IPR000194">
    <property type="entry name" value="ATPase_F1/V1/A1_a/bsu_nucl-bd"/>
</dbReference>
<dbReference type="InterPro" id="IPR027417">
    <property type="entry name" value="P-loop_NTPase"/>
</dbReference>
<dbReference type="NCBIfam" id="TIGR00962">
    <property type="entry name" value="atpA"/>
    <property type="match status" value="1"/>
</dbReference>
<dbReference type="NCBIfam" id="NF009884">
    <property type="entry name" value="PRK13343.1"/>
    <property type="match status" value="1"/>
</dbReference>
<dbReference type="PANTHER" id="PTHR48082">
    <property type="entry name" value="ATP SYNTHASE SUBUNIT ALPHA, MITOCHONDRIAL"/>
    <property type="match status" value="1"/>
</dbReference>
<dbReference type="PANTHER" id="PTHR48082:SF2">
    <property type="entry name" value="ATP SYNTHASE SUBUNIT ALPHA, MITOCHONDRIAL"/>
    <property type="match status" value="1"/>
</dbReference>
<dbReference type="Pfam" id="PF00006">
    <property type="entry name" value="ATP-synt_ab"/>
    <property type="match status" value="1"/>
</dbReference>
<dbReference type="Pfam" id="PF00306">
    <property type="entry name" value="ATP-synt_ab_C"/>
    <property type="match status" value="1"/>
</dbReference>
<dbReference type="Pfam" id="PF02874">
    <property type="entry name" value="ATP-synt_ab_N"/>
    <property type="match status" value="1"/>
</dbReference>
<dbReference type="SUPFAM" id="SSF47917">
    <property type="entry name" value="C-terminal domain of alpha and beta subunits of F1 ATP synthase"/>
    <property type="match status" value="1"/>
</dbReference>
<dbReference type="SUPFAM" id="SSF50615">
    <property type="entry name" value="N-terminal domain of alpha and beta subunits of F1 ATP synthase"/>
    <property type="match status" value="1"/>
</dbReference>
<dbReference type="SUPFAM" id="SSF52540">
    <property type="entry name" value="P-loop containing nucleoside triphosphate hydrolases"/>
    <property type="match status" value="1"/>
</dbReference>
<dbReference type="PROSITE" id="PS00152">
    <property type="entry name" value="ATPASE_ALPHA_BETA"/>
    <property type="match status" value="1"/>
</dbReference>